<proteinExistence type="evidence at transcript level"/>
<name>LEUC_CORGL</name>
<keyword id="KW-0004">4Fe-4S</keyword>
<keyword id="KW-0028">Amino-acid biosynthesis</keyword>
<keyword id="KW-0100">Branched-chain amino acid biosynthesis</keyword>
<keyword id="KW-0408">Iron</keyword>
<keyword id="KW-0411">Iron-sulfur</keyword>
<keyword id="KW-0432">Leucine biosynthesis</keyword>
<keyword id="KW-0456">Lyase</keyword>
<keyword id="KW-0479">Metal-binding</keyword>
<keyword id="KW-1185">Reference proteome</keyword>
<gene>
    <name evidence="1" type="primary">leuC</name>
    <name type="ordered locus">Cgl1315</name>
    <name type="ordered locus">cg1487</name>
</gene>
<organism>
    <name type="scientific">Corynebacterium glutamicum (strain ATCC 13032 / DSM 20300 / JCM 1318 / BCRC 11384 / CCUG 27702 / LMG 3730 / NBRC 12168 / NCIMB 10025 / NRRL B-2784 / 534)</name>
    <dbReference type="NCBI Taxonomy" id="196627"/>
    <lineage>
        <taxon>Bacteria</taxon>
        <taxon>Bacillati</taxon>
        <taxon>Actinomycetota</taxon>
        <taxon>Actinomycetes</taxon>
        <taxon>Mycobacteriales</taxon>
        <taxon>Corynebacteriaceae</taxon>
        <taxon>Corynebacterium</taxon>
    </lineage>
</organism>
<evidence type="ECO:0000255" key="1">
    <source>
        <dbReference type="HAMAP-Rule" id="MF_01026"/>
    </source>
</evidence>
<evidence type="ECO:0000256" key="2">
    <source>
        <dbReference type="SAM" id="MobiDB-lite"/>
    </source>
</evidence>
<evidence type="ECO:0000269" key="3">
    <source>
    </source>
</evidence>
<accession>P58946</accession>
<sequence length="481" mass="51705">MTSPVENSTSTEKLTLAEKVWRDHVVSKGENGEPDLLYIDLQLLHEVTSPQAFDGLRMTGRKLRHPELHLATEDHNVPTEGIKTGSLLEINDKISRLQVSTLRDNCEEFGVRLHPMGDVRQGIVHTVGPQLGATQPGMTIVCGDSHTSTHGAFGSMAFGIGTSEVEHVMATQTLPLKPFKTMAIEVTGELQPGVSSKDLILAIIAKIGTGGGQGYVLEYRGEAIRKMSMDARMTMCNMSIEAGARAGMIAPDQTTFDYVEGREMAPKGADWDEAVAYWKTLPTDEGATFDKVVEIDGSALTPFITWGTNPGQGLPLGESVPSPEDFTNDNDKAAAEKALQYMDLVPGTPLRDIKIDTVFLGSCTNARIEDLQIAADILKGHKIADGMRMMVVPSSTWIKQEAEALGLDKIFTDAGAEWRTAGCSMCLGMNPDQLKPGERSASTSNRNFEGRQGPGGRTHLVSPAVAAATAIRGTLSSPADI</sequence>
<reference key="1">
    <citation type="journal article" date="2003" name="Appl. Microbiol. Biotechnol.">
        <title>The Corynebacterium glutamicum genome: features and impacts on biotechnological processes.</title>
        <authorList>
            <person name="Ikeda M."/>
            <person name="Nakagawa S."/>
        </authorList>
    </citation>
    <scope>NUCLEOTIDE SEQUENCE [LARGE SCALE GENOMIC DNA]</scope>
    <source>
        <strain>ATCC 13032 / DSM 20300 / JCM 1318 / BCRC 11384 / CCUG 27702 / LMG 3730 / NBRC 12168 / NCIMB 10025 / NRRL B-2784 / 534</strain>
    </source>
</reference>
<reference key="2">
    <citation type="journal article" date="2003" name="J. Biotechnol.">
        <title>The complete Corynebacterium glutamicum ATCC 13032 genome sequence and its impact on the production of L-aspartate-derived amino acids and vitamins.</title>
        <authorList>
            <person name="Kalinowski J."/>
            <person name="Bathe B."/>
            <person name="Bartels D."/>
            <person name="Bischoff N."/>
            <person name="Bott M."/>
            <person name="Burkovski A."/>
            <person name="Dusch N."/>
            <person name="Eggeling L."/>
            <person name="Eikmanns B.J."/>
            <person name="Gaigalat L."/>
            <person name="Goesmann A."/>
            <person name="Hartmann M."/>
            <person name="Huthmacher K."/>
            <person name="Kraemer R."/>
            <person name="Linke B."/>
            <person name="McHardy A.C."/>
            <person name="Meyer F."/>
            <person name="Moeckel B."/>
            <person name="Pfefferle W."/>
            <person name="Puehler A."/>
            <person name="Rey D.A."/>
            <person name="Rueckert C."/>
            <person name="Rupp O."/>
            <person name="Sahm H."/>
            <person name="Wendisch V.F."/>
            <person name="Wiegraebe I."/>
            <person name="Tauch A."/>
        </authorList>
    </citation>
    <scope>NUCLEOTIDE SEQUENCE [LARGE SCALE GENOMIC DNA]</scope>
    <source>
        <strain>ATCC 13032 / DSM 20300 / JCM 1318 / BCRC 11384 / CCUG 27702 / LMG 3730 / NBRC 12168 / NCIMB 10025 / NRRL B-2784 / 534</strain>
    </source>
</reference>
<reference key="3">
    <citation type="journal article" date="2005" name="J. Biol. Chem.">
        <title>The AraC-type regulator RipA represses aconitase and other iron proteins from Corynebacterium under iron limitation and is itself repressed by DtxR.</title>
        <authorList>
            <person name="Wennerhold J."/>
            <person name="Krug A."/>
            <person name="Bott M."/>
        </authorList>
    </citation>
    <scope>INDUCTION</scope>
    <source>
        <strain>ATCC 13032 / DSM 20300 / JCM 1318 / BCRC 11384 / CCUG 27702 / LMG 3730 / NBRC 12168 / NCIMB 10025 / NRRL B-2784 / 534</strain>
    </source>
</reference>
<protein>
    <recommendedName>
        <fullName evidence="1">3-isopropylmalate dehydratase large subunit</fullName>
        <ecNumber evidence="1">4.2.1.33</ecNumber>
    </recommendedName>
    <alternativeName>
        <fullName evidence="1">Alpha-IPM isomerase</fullName>
        <shortName evidence="1">IPMI</shortName>
    </alternativeName>
    <alternativeName>
        <fullName evidence="1">Isopropylmalate isomerase</fullName>
    </alternativeName>
</protein>
<dbReference type="EC" id="4.2.1.33" evidence="1"/>
<dbReference type="EMBL" id="BA000036">
    <property type="protein sequence ID" value="BAB98708.1"/>
    <property type="molecule type" value="Genomic_DNA"/>
</dbReference>
<dbReference type="EMBL" id="BX927151">
    <property type="protein sequence ID" value="CAF20014.1"/>
    <property type="molecule type" value="Genomic_DNA"/>
</dbReference>
<dbReference type="RefSeq" id="NP_600536.1">
    <property type="nucleotide sequence ID" value="NC_003450.3"/>
</dbReference>
<dbReference type="RefSeq" id="WP_011014281.1">
    <property type="nucleotide sequence ID" value="NC_006958.1"/>
</dbReference>
<dbReference type="SMR" id="P58946"/>
<dbReference type="STRING" id="196627.cg1487"/>
<dbReference type="DNASU" id="3345229"/>
<dbReference type="GeneID" id="1019292"/>
<dbReference type="KEGG" id="cgb:cg1487"/>
<dbReference type="KEGG" id="cgl:Cgl1315"/>
<dbReference type="PATRIC" id="fig|196627.13.peg.1287"/>
<dbReference type="eggNOG" id="COG0065">
    <property type="taxonomic scope" value="Bacteria"/>
</dbReference>
<dbReference type="HOGENOM" id="CLU_006714_3_4_11"/>
<dbReference type="OrthoDB" id="9802769at2"/>
<dbReference type="BioCyc" id="CORYNE:G18NG-10893-MONOMER"/>
<dbReference type="UniPathway" id="UPA00048">
    <property type="reaction ID" value="UER00071"/>
</dbReference>
<dbReference type="Proteomes" id="UP000000582">
    <property type="component" value="Chromosome"/>
</dbReference>
<dbReference type="Proteomes" id="UP000001009">
    <property type="component" value="Chromosome"/>
</dbReference>
<dbReference type="GO" id="GO:0003861">
    <property type="term" value="F:3-isopropylmalate dehydratase activity"/>
    <property type="evidence" value="ECO:0007669"/>
    <property type="project" value="UniProtKB-UniRule"/>
</dbReference>
<dbReference type="GO" id="GO:0051539">
    <property type="term" value="F:4 iron, 4 sulfur cluster binding"/>
    <property type="evidence" value="ECO:0007669"/>
    <property type="project" value="UniProtKB-KW"/>
</dbReference>
<dbReference type="GO" id="GO:0046872">
    <property type="term" value="F:metal ion binding"/>
    <property type="evidence" value="ECO:0007669"/>
    <property type="project" value="UniProtKB-KW"/>
</dbReference>
<dbReference type="GO" id="GO:0009098">
    <property type="term" value="P:L-leucine biosynthetic process"/>
    <property type="evidence" value="ECO:0007669"/>
    <property type="project" value="UniProtKB-UniRule"/>
</dbReference>
<dbReference type="CDD" id="cd01583">
    <property type="entry name" value="IPMI"/>
    <property type="match status" value="1"/>
</dbReference>
<dbReference type="FunFam" id="3.30.499.10:FF:000007">
    <property type="entry name" value="3-isopropylmalate dehydratase large subunit"/>
    <property type="match status" value="1"/>
</dbReference>
<dbReference type="Gene3D" id="3.30.499.10">
    <property type="entry name" value="Aconitase, domain 3"/>
    <property type="match status" value="2"/>
</dbReference>
<dbReference type="HAMAP" id="MF_01026">
    <property type="entry name" value="LeuC_type1"/>
    <property type="match status" value="1"/>
</dbReference>
<dbReference type="InterPro" id="IPR004430">
    <property type="entry name" value="3-IsopropMal_deHydase_lsu"/>
</dbReference>
<dbReference type="InterPro" id="IPR015931">
    <property type="entry name" value="Acnase/IPM_dHydase_lsu_aba_1/3"/>
</dbReference>
<dbReference type="InterPro" id="IPR001030">
    <property type="entry name" value="Acoase/IPM_deHydtase_lsu_aba"/>
</dbReference>
<dbReference type="InterPro" id="IPR018136">
    <property type="entry name" value="Aconitase_4Fe-4S_BS"/>
</dbReference>
<dbReference type="InterPro" id="IPR036008">
    <property type="entry name" value="Aconitase_4Fe-4S_dom"/>
</dbReference>
<dbReference type="InterPro" id="IPR050067">
    <property type="entry name" value="IPM_dehydratase_rel_enz"/>
</dbReference>
<dbReference type="InterPro" id="IPR033941">
    <property type="entry name" value="IPMI_cat"/>
</dbReference>
<dbReference type="NCBIfam" id="TIGR00170">
    <property type="entry name" value="leuC"/>
    <property type="match status" value="1"/>
</dbReference>
<dbReference type="NCBIfam" id="NF004016">
    <property type="entry name" value="PRK05478.1"/>
    <property type="match status" value="1"/>
</dbReference>
<dbReference type="NCBIfam" id="NF009116">
    <property type="entry name" value="PRK12466.1"/>
    <property type="match status" value="1"/>
</dbReference>
<dbReference type="PANTHER" id="PTHR43822:SF9">
    <property type="entry name" value="3-ISOPROPYLMALATE DEHYDRATASE"/>
    <property type="match status" value="1"/>
</dbReference>
<dbReference type="PANTHER" id="PTHR43822">
    <property type="entry name" value="HOMOACONITASE, MITOCHONDRIAL-RELATED"/>
    <property type="match status" value="1"/>
</dbReference>
<dbReference type="Pfam" id="PF00330">
    <property type="entry name" value="Aconitase"/>
    <property type="match status" value="1"/>
</dbReference>
<dbReference type="PRINTS" id="PR00415">
    <property type="entry name" value="ACONITASE"/>
</dbReference>
<dbReference type="SUPFAM" id="SSF53732">
    <property type="entry name" value="Aconitase iron-sulfur domain"/>
    <property type="match status" value="1"/>
</dbReference>
<dbReference type="PROSITE" id="PS00450">
    <property type="entry name" value="ACONITASE_1"/>
    <property type="match status" value="1"/>
</dbReference>
<dbReference type="PROSITE" id="PS01244">
    <property type="entry name" value="ACONITASE_2"/>
    <property type="match status" value="1"/>
</dbReference>
<comment type="function">
    <text evidence="1">Catalyzes the isomerization between 2-isopropylmalate and 3-isopropylmalate, via the formation of 2-isopropylmaleate.</text>
</comment>
<comment type="catalytic activity">
    <reaction evidence="1">
        <text>(2R,3S)-3-isopropylmalate = (2S)-2-isopropylmalate</text>
        <dbReference type="Rhea" id="RHEA:32287"/>
        <dbReference type="ChEBI" id="CHEBI:1178"/>
        <dbReference type="ChEBI" id="CHEBI:35121"/>
        <dbReference type="EC" id="4.2.1.33"/>
    </reaction>
</comment>
<comment type="cofactor">
    <cofactor evidence="1">
        <name>[4Fe-4S] cluster</name>
        <dbReference type="ChEBI" id="CHEBI:49883"/>
    </cofactor>
    <text evidence="1">Binds 1 [4Fe-4S] cluster per subunit.</text>
</comment>
<comment type="pathway">
    <text evidence="1">Amino-acid biosynthesis; L-leucine biosynthesis; L-leucine from 3-methyl-2-oxobutanoate: step 2/4.</text>
</comment>
<comment type="subunit">
    <text evidence="1">Heterodimer of LeuC and LeuD.</text>
</comment>
<comment type="induction">
    <text evidence="3">Repressed by RipA.</text>
</comment>
<comment type="similarity">
    <text evidence="1">Belongs to the aconitase/IPM isomerase family. LeuC type 1 subfamily.</text>
</comment>
<feature type="chain" id="PRO_0000076741" description="3-isopropylmalate dehydratase large subunit">
    <location>
        <begin position="1"/>
        <end position="481"/>
    </location>
</feature>
<feature type="region of interest" description="Disordered" evidence="2">
    <location>
        <begin position="432"/>
        <end position="459"/>
    </location>
</feature>
<feature type="binding site" evidence="1">
    <location>
        <position position="363"/>
    </location>
    <ligand>
        <name>[4Fe-4S] cluster</name>
        <dbReference type="ChEBI" id="CHEBI:49883"/>
    </ligand>
</feature>
<feature type="binding site" evidence="1">
    <location>
        <position position="423"/>
    </location>
    <ligand>
        <name>[4Fe-4S] cluster</name>
        <dbReference type="ChEBI" id="CHEBI:49883"/>
    </ligand>
</feature>
<feature type="binding site" evidence="1">
    <location>
        <position position="426"/>
    </location>
    <ligand>
        <name>[4Fe-4S] cluster</name>
        <dbReference type="ChEBI" id="CHEBI:49883"/>
    </ligand>
</feature>